<organism>
    <name type="scientific">Burkholderia pseudomallei (strain 1710b)</name>
    <dbReference type="NCBI Taxonomy" id="320372"/>
    <lineage>
        <taxon>Bacteria</taxon>
        <taxon>Pseudomonadati</taxon>
        <taxon>Pseudomonadota</taxon>
        <taxon>Betaproteobacteria</taxon>
        <taxon>Burkholderiales</taxon>
        <taxon>Burkholderiaceae</taxon>
        <taxon>Burkholderia</taxon>
        <taxon>pseudomallei group</taxon>
    </lineage>
</organism>
<sequence length="415" mass="44985">MFDRAQSTIANVDPEIWQAIQQENVRQEEHIELIASENYTSPAVMAAQGSQLTNKYAEGYPGKRYYGGCEYVDIVEQLAIDRVKALFGAEAANVQPNSGSQANQGVFFAMLKPGDTIMGMSLAHGGHLTHGSPVNMSGKWFNVVSYGLNEAEDIDYEAAEQLAHEHKPKLIVAGASAFALKIDFERLAKIAKAVGAYLMVDMAHYAGLIAAGVYPNPVPHADFVTTTTHKSLRGPRGGVILMKAEYEKQINSAIFPGIQGGPLMHVIAAKAVAFKEALSPEFKEYQQKVVENARVLAQTLVKRGLRIVSGRTESHVMLVDLRAKNITGKAAEAALGNAHITVNKNAIPNDPEKPFVTSGVRLGSPAMTTRGFGPQEAELVGNLIADVLEHPEDAATIERVRAQVAELTKRFPVYR</sequence>
<comment type="function">
    <text evidence="1">Catalyzes the reversible interconversion of serine and glycine with tetrahydrofolate (THF) serving as the one-carbon carrier. This reaction serves as the major source of one-carbon groups required for the biosynthesis of purines, thymidylate, methionine, and other important biomolecules. Also exhibits THF-independent aldolase activity toward beta-hydroxyamino acids, producing glycine and aldehydes, via a retro-aldol mechanism.</text>
</comment>
<comment type="catalytic activity">
    <reaction evidence="1">
        <text>(6R)-5,10-methylene-5,6,7,8-tetrahydrofolate + glycine + H2O = (6S)-5,6,7,8-tetrahydrofolate + L-serine</text>
        <dbReference type="Rhea" id="RHEA:15481"/>
        <dbReference type="ChEBI" id="CHEBI:15377"/>
        <dbReference type="ChEBI" id="CHEBI:15636"/>
        <dbReference type="ChEBI" id="CHEBI:33384"/>
        <dbReference type="ChEBI" id="CHEBI:57305"/>
        <dbReference type="ChEBI" id="CHEBI:57453"/>
        <dbReference type="EC" id="2.1.2.1"/>
    </reaction>
</comment>
<comment type="cofactor">
    <cofactor evidence="1">
        <name>pyridoxal 5'-phosphate</name>
        <dbReference type="ChEBI" id="CHEBI:597326"/>
    </cofactor>
</comment>
<comment type="pathway">
    <text evidence="1">One-carbon metabolism; tetrahydrofolate interconversion.</text>
</comment>
<comment type="pathway">
    <text evidence="1">Amino-acid biosynthesis; glycine biosynthesis; glycine from L-serine: step 1/1.</text>
</comment>
<comment type="subunit">
    <text evidence="1">Homodimer.</text>
</comment>
<comment type="subcellular location">
    <subcellularLocation>
        <location evidence="1">Cytoplasm</location>
    </subcellularLocation>
</comment>
<comment type="similarity">
    <text evidence="1">Belongs to the SHMT family.</text>
</comment>
<comment type="sequence caution" evidence="2">
    <conflict type="erroneous initiation">
        <sequence resource="EMBL-CDS" id="ABA50641"/>
    </conflict>
</comment>
<name>GLYA1_BURP1</name>
<accession>Q3JP81</accession>
<dbReference type="EC" id="2.1.2.1" evidence="1"/>
<dbReference type="EMBL" id="CP000124">
    <property type="protein sequence ID" value="ABA50641.1"/>
    <property type="status" value="ALT_INIT"/>
    <property type="molecule type" value="Genomic_DNA"/>
</dbReference>
<dbReference type="SMR" id="Q3JP81"/>
<dbReference type="EnsemblBacteria" id="ABA50641">
    <property type="protein sequence ID" value="ABA50641"/>
    <property type="gene ID" value="BURPS1710b_3250"/>
</dbReference>
<dbReference type="KEGG" id="bpm:BURPS1710b_3250"/>
<dbReference type="HOGENOM" id="CLU_022477_2_1_4"/>
<dbReference type="UniPathway" id="UPA00193"/>
<dbReference type="UniPathway" id="UPA00288">
    <property type="reaction ID" value="UER01023"/>
</dbReference>
<dbReference type="Proteomes" id="UP000002700">
    <property type="component" value="Chromosome I"/>
</dbReference>
<dbReference type="GO" id="GO:0005829">
    <property type="term" value="C:cytosol"/>
    <property type="evidence" value="ECO:0007669"/>
    <property type="project" value="TreeGrafter"/>
</dbReference>
<dbReference type="GO" id="GO:0004372">
    <property type="term" value="F:glycine hydroxymethyltransferase activity"/>
    <property type="evidence" value="ECO:0007669"/>
    <property type="project" value="UniProtKB-UniRule"/>
</dbReference>
<dbReference type="GO" id="GO:0030170">
    <property type="term" value="F:pyridoxal phosphate binding"/>
    <property type="evidence" value="ECO:0007669"/>
    <property type="project" value="UniProtKB-UniRule"/>
</dbReference>
<dbReference type="GO" id="GO:0019264">
    <property type="term" value="P:glycine biosynthetic process from serine"/>
    <property type="evidence" value="ECO:0007669"/>
    <property type="project" value="UniProtKB-UniRule"/>
</dbReference>
<dbReference type="GO" id="GO:0035999">
    <property type="term" value="P:tetrahydrofolate interconversion"/>
    <property type="evidence" value="ECO:0007669"/>
    <property type="project" value="UniProtKB-UniRule"/>
</dbReference>
<dbReference type="CDD" id="cd00378">
    <property type="entry name" value="SHMT"/>
    <property type="match status" value="1"/>
</dbReference>
<dbReference type="FunFam" id="3.40.640.10:FF:000001">
    <property type="entry name" value="Serine hydroxymethyltransferase"/>
    <property type="match status" value="1"/>
</dbReference>
<dbReference type="FunFam" id="3.90.1150.10:FF:000003">
    <property type="entry name" value="Serine hydroxymethyltransferase"/>
    <property type="match status" value="1"/>
</dbReference>
<dbReference type="Gene3D" id="3.90.1150.10">
    <property type="entry name" value="Aspartate Aminotransferase, domain 1"/>
    <property type="match status" value="1"/>
</dbReference>
<dbReference type="Gene3D" id="3.40.640.10">
    <property type="entry name" value="Type I PLP-dependent aspartate aminotransferase-like (Major domain)"/>
    <property type="match status" value="1"/>
</dbReference>
<dbReference type="HAMAP" id="MF_00051">
    <property type="entry name" value="SHMT"/>
    <property type="match status" value="1"/>
</dbReference>
<dbReference type="InterPro" id="IPR015424">
    <property type="entry name" value="PyrdxlP-dep_Trfase"/>
</dbReference>
<dbReference type="InterPro" id="IPR015421">
    <property type="entry name" value="PyrdxlP-dep_Trfase_major"/>
</dbReference>
<dbReference type="InterPro" id="IPR015422">
    <property type="entry name" value="PyrdxlP-dep_Trfase_small"/>
</dbReference>
<dbReference type="InterPro" id="IPR001085">
    <property type="entry name" value="Ser_HO-MeTrfase"/>
</dbReference>
<dbReference type="InterPro" id="IPR049943">
    <property type="entry name" value="Ser_HO-MeTrfase-like"/>
</dbReference>
<dbReference type="InterPro" id="IPR019798">
    <property type="entry name" value="Ser_HO-MeTrfase_PLP_BS"/>
</dbReference>
<dbReference type="InterPro" id="IPR039429">
    <property type="entry name" value="SHMT-like_dom"/>
</dbReference>
<dbReference type="NCBIfam" id="NF000586">
    <property type="entry name" value="PRK00011.1"/>
    <property type="match status" value="1"/>
</dbReference>
<dbReference type="PANTHER" id="PTHR11680">
    <property type="entry name" value="SERINE HYDROXYMETHYLTRANSFERASE"/>
    <property type="match status" value="1"/>
</dbReference>
<dbReference type="PANTHER" id="PTHR11680:SF50">
    <property type="entry name" value="SERINE HYDROXYMETHYLTRANSFERASE"/>
    <property type="match status" value="1"/>
</dbReference>
<dbReference type="Pfam" id="PF00464">
    <property type="entry name" value="SHMT"/>
    <property type="match status" value="1"/>
</dbReference>
<dbReference type="PIRSF" id="PIRSF000412">
    <property type="entry name" value="SHMT"/>
    <property type="match status" value="1"/>
</dbReference>
<dbReference type="SUPFAM" id="SSF53383">
    <property type="entry name" value="PLP-dependent transferases"/>
    <property type="match status" value="1"/>
</dbReference>
<dbReference type="PROSITE" id="PS00096">
    <property type="entry name" value="SHMT"/>
    <property type="match status" value="1"/>
</dbReference>
<feature type="chain" id="PRO_0000234955" description="Serine hydroxymethyltransferase 1">
    <location>
        <begin position="1"/>
        <end position="415"/>
    </location>
</feature>
<feature type="binding site" evidence="1">
    <location>
        <position position="122"/>
    </location>
    <ligand>
        <name>(6S)-5,6,7,8-tetrahydrofolate</name>
        <dbReference type="ChEBI" id="CHEBI:57453"/>
    </ligand>
</feature>
<feature type="binding site" evidence="1">
    <location>
        <begin position="126"/>
        <end position="128"/>
    </location>
    <ligand>
        <name>(6S)-5,6,7,8-tetrahydrofolate</name>
        <dbReference type="ChEBI" id="CHEBI:57453"/>
    </ligand>
</feature>
<feature type="site" description="Plays an important role in substrate specificity" evidence="1">
    <location>
        <position position="229"/>
    </location>
</feature>
<feature type="modified residue" description="N6-(pyridoxal phosphate)lysine" evidence="1">
    <location>
        <position position="230"/>
    </location>
</feature>
<gene>
    <name evidence="1" type="primary">glyA1</name>
    <name type="ordered locus">BURPS1710b_3250</name>
</gene>
<protein>
    <recommendedName>
        <fullName evidence="1">Serine hydroxymethyltransferase 1</fullName>
        <shortName evidence="1">SHMT 1</shortName>
        <shortName evidence="1">Serine methylase 1</shortName>
        <ecNumber evidence="1">2.1.2.1</ecNumber>
    </recommendedName>
</protein>
<reference key="1">
    <citation type="journal article" date="2010" name="Genome Biol. Evol.">
        <title>Continuing evolution of Burkholderia mallei through genome reduction and large-scale rearrangements.</title>
        <authorList>
            <person name="Losada L."/>
            <person name="Ronning C.M."/>
            <person name="DeShazer D."/>
            <person name="Woods D."/>
            <person name="Fedorova N."/>
            <person name="Kim H.S."/>
            <person name="Shabalina S.A."/>
            <person name="Pearson T.R."/>
            <person name="Brinkac L."/>
            <person name="Tan P."/>
            <person name="Nandi T."/>
            <person name="Crabtree J."/>
            <person name="Badger J."/>
            <person name="Beckstrom-Sternberg S."/>
            <person name="Saqib M."/>
            <person name="Schutzer S.E."/>
            <person name="Keim P."/>
            <person name="Nierman W.C."/>
        </authorList>
    </citation>
    <scope>NUCLEOTIDE SEQUENCE [LARGE SCALE GENOMIC DNA]</scope>
    <source>
        <strain>1710b</strain>
    </source>
</reference>
<keyword id="KW-0028">Amino-acid biosynthesis</keyword>
<keyword id="KW-0963">Cytoplasm</keyword>
<keyword id="KW-0554">One-carbon metabolism</keyword>
<keyword id="KW-0663">Pyridoxal phosphate</keyword>
<keyword id="KW-0808">Transferase</keyword>
<proteinExistence type="inferred from homology"/>
<evidence type="ECO:0000255" key="1">
    <source>
        <dbReference type="HAMAP-Rule" id="MF_00051"/>
    </source>
</evidence>
<evidence type="ECO:0000305" key="2"/>